<name>CHP2_SCHPO</name>
<reference key="1">
    <citation type="journal article" date="2002" name="Nature">
        <title>The genome sequence of Schizosaccharomyces pombe.</title>
        <authorList>
            <person name="Wood V."/>
            <person name="Gwilliam R."/>
            <person name="Rajandream M.A."/>
            <person name="Lyne M.H."/>
            <person name="Lyne R."/>
            <person name="Stewart A."/>
            <person name="Sgouros J.G."/>
            <person name="Peat N."/>
            <person name="Hayles J."/>
            <person name="Baker S.G."/>
            <person name="Basham D."/>
            <person name="Bowman S."/>
            <person name="Brooks K."/>
            <person name="Brown D."/>
            <person name="Brown S."/>
            <person name="Chillingworth T."/>
            <person name="Churcher C.M."/>
            <person name="Collins M."/>
            <person name="Connor R."/>
            <person name="Cronin A."/>
            <person name="Davis P."/>
            <person name="Feltwell T."/>
            <person name="Fraser A."/>
            <person name="Gentles S."/>
            <person name="Goble A."/>
            <person name="Hamlin N."/>
            <person name="Harris D.E."/>
            <person name="Hidalgo J."/>
            <person name="Hodgson G."/>
            <person name="Holroyd S."/>
            <person name="Hornsby T."/>
            <person name="Howarth S."/>
            <person name="Huckle E.J."/>
            <person name="Hunt S."/>
            <person name="Jagels K."/>
            <person name="James K.D."/>
            <person name="Jones L."/>
            <person name="Jones M."/>
            <person name="Leather S."/>
            <person name="McDonald S."/>
            <person name="McLean J."/>
            <person name="Mooney P."/>
            <person name="Moule S."/>
            <person name="Mungall K.L."/>
            <person name="Murphy L.D."/>
            <person name="Niblett D."/>
            <person name="Odell C."/>
            <person name="Oliver K."/>
            <person name="O'Neil S."/>
            <person name="Pearson D."/>
            <person name="Quail M.A."/>
            <person name="Rabbinowitsch E."/>
            <person name="Rutherford K.M."/>
            <person name="Rutter S."/>
            <person name="Saunders D."/>
            <person name="Seeger K."/>
            <person name="Sharp S."/>
            <person name="Skelton J."/>
            <person name="Simmonds M.N."/>
            <person name="Squares R."/>
            <person name="Squares S."/>
            <person name="Stevens K."/>
            <person name="Taylor K."/>
            <person name="Taylor R.G."/>
            <person name="Tivey A."/>
            <person name="Walsh S.V."/>
            <person name="Warren T."/>
            <person name="Whitehead S."/>
            <person name="Woodward J.R."/>
            <person name="Volckaert G."/>
            <person name="Aert R."/>
            <person name="Robben J."/>
            <person name="Grymonprez B."/>
            <person name="Weltjens I."/>
            <person name="Vanstreels E."/>
            <person name="Rieger M."/>
            <person name="Schaefer M."/>
            <person name="Mueller-Auer S."/>
            <person name="Gabel C."/>
            <person name="Fuchs M."/>
            <person name="Duesterhoeft A."/>
            <person name="Fritzc C."/>
            <person name="Holzer E."/>
            <person name="Moestl D."/>
            <person name="Hilbert H."/>
            <person name="Borzym K."/>
            <person name="Langer I."/>
            <person name="Beck A."/>
            <person name="Lehrach H."/>
            <person name="Reinhardt R."/>
            <person name="Pohl T.M."/>
            <person name="Eger P."/>
            <person name="Zimmermann W."/>
            <person name="Wedler H."/>
            <person name="Wambutt R."/>
            <person name="Purnelle B."/>
            <person name="Goffeau A."/>
            <person name="Cadieu E."/>
            <person name="Dreano S."/>
            <person name="Gloux S."/>
            <person name="Lelaure V."/>
            <person name="Mottier S."/>
            <person name="Galibert F."/>
            <person name="Aves S.J."/>
            <person name="Xiang Z."/>
            <person name="Hunt C."/>
            <person name="Moore K."/>
            <person name="Hurst S.M."/>
            <person name="Lucas M."/>
            <person name="Rochet M."/>
            <person name="Gaillardin C."/>
            <person name="Tallada V.A."/>
            <person name="Garzon A."/>
            <person name="Thode G."/>
            <person name="Daga R.R."/>
            <person name="Cruzado L."/>
            <person name="Jimenez J."/>
            <person name="Sanchez M."/>
            <person name="del Rey F."/>
            <person name="Benito J."/>
            <person name="Dominguez A."/>
            <person name="Revuelta J.L."/>
            <person name="Moreno S."/>
            <person name="Armstrong J."/>
            <person name="Forsburg S.L."/>
            <person name="Cerutti L."/>
            <person name="Lowe T."/>
            <person name="McCombie W.R."/>
            <person name="Paulsen I."/>
            <person name="Potashkin J."/>
            <person name="Shpakovski G.V."/>
            <person name="Ussery D."/>
            <person name="Barrell B.G."/>
            <person name="Nurse P."/>
        </authorList>
    </citation>
    <scope>NUCLEOTIDE SEQUENCE [LARGE SCALE GENOMIC DNA]</scope>
    <source>
        <strain>972 / ATCC 24843</strain>
    </source>
</reference>
<reference key="2">
    <citation type="journal article" date="2000" name="Genetics">
        <title>Four chromo-domain proteins of Schizosaccharomyces pombe differentially repress transcription at various chromosomal locations.</title>
        <authorList>
            <person name="Thon G."/>
            <person name="Verhein-Hansen J."/>
        </authorList>
    </citation>
    <scope>FUNCTION</scope>
</reference>
<comment type="function">
    <text evidence="4">Component of the kinetochore which plays a role in stabilizing microtubules and so allowing accurate chromosome segregation.</text>
</comment>
<comment type="subcellular location">
    <subcellularLocation>
        <location evidence="1">Nucleus</location>
    </subcellularLocation>
</comment>
<dbReference type="EMBL" id="CU329671">
    <property type="protein sequence ID" value="CAA16917.1"/>
    <property type="molecule type" value="Genomic_DNA"/>
</dbReference>
<dbReference type="PIR" id="T39561">
    <property type="entry name" value="T39561"/>
</dbReference>
<dbReference type="RefSeq" id="NP_596808.1">
    <property type="nucleotide sequence ID" value="NM_001023829.2"/>
</dbReference>
<dbReference type="PDB" id="6FTO">
    <property type="method" value="X-ray"/>
    <property type="resolution" value="1.60 A"/>
    <property type="chains" value="A/B=315-380"/>
</dbReference>
<dbReference type="PDBsum" id="6FTO"/>
<dbReference type="SMR" id="O42934"/>
<dbReference type="BioGRID" id="276585">
    <property type="interactions" value="14"/>
</dbReference>
<dbReference type="FunCoup" id="O42934">
    <property type="interactions" value="9"/>
</dbReference>
<dbReference type="STRING" id="284812.O42934"/>
<dbReference type="iPTMnet" id="O42934"/>
<dbReference type="PaxDb" id="4896-SPBC16C6.10.1"/>
<dbReference type="EnsemblFungi" id="SPBC16C6.10.1">
    <property type="protein sequence ID" value="SPBC16C6.10.1:pep"/>
    <property type="gene ID" value="SPBC16C6.10"/>
</dbReference>
<dbReference type="GeneID" id="2540047"/>
<dbReference type="KEGG" id="spo:2540047"/>
<dbReference type="PomBase" id="SPBC16C6.10">
    <property type="gene designation" value="chp2"/>
</dbReference>
<dbReference type="VEuPathDB" id="FungiDB:SPBC16C6.10"/>
<dbReference type="eggNOG" id="KOG1911">
    <property type="taxonomic scope" value="Eukaryota"/>
</dbReference>
<dbReference type="HOGENOM" id="CLU_727924_0_0_1"/>
<dbReference type="InParanoid" id="O42934"/>
<dbReference type="OMA" id="THEQNCA"/>
<dbReference type="PhylomeDB" id="O42934"/>
<dbReference type="Reactome" id="R-SPO-983231">
    <property type="pathway name" value="Factors involved in megakaryocyte development and platelet production"/>
</dbReference>
<dbReference type="PRO" id="PR:O42934"/>
<dbReference type="Proteomes" id="UP000002485">
    <property type="component" value="Chromosome II"/>
</dbReference>
<dbReference type="GO" id="GO:0031934">
    <property type="term" value="C:mating-type region heterochromatin"/>
    <property type="evidence" value="ECO:0000314"/>
    <property type="project" value="PomBase"/>
</dbReference>
<dbReference type="GO" id="GO:0005634">
    <property type="term" value="C:nucleus"/>
    <property type="evidence" value="ECO:0007005"/>
    <property type="project" value="PomBase"/>
</dbReference>
<dbReference type="GO" id="GO:0005721">
    <property type="term" value="C:pericentric heterochromatin"/>
    <property type="evidence" value="ECO:0000314"/>
    <property type="project" value="PomBase"/>
</dbReference>
<dbReference type="GO" id="GO:0140720">
    <property type="term" value="C:subtelomeric heterochromatin"/>
    <property type="evidence" value="ECO:0000314"/>
    <property type="project" value="PomBase"/>
</dbReference>
<dbReference type="GO" id="GO:0003682">
    <property type="term" value="F:chromatin binding"/>
    <property type="evidence" value="ECO:0000318"/>
    <property type="project" value="GO_Central"/>
</dbReference>
<dbReference type="GO" id="GO:0003677">
    <property type="term" value="F:DNA binding"/>
    <property type="evidence" value="ECO:0000314"/>
    <property type="project" value="PomBase"/>
</dbReference>
<dbReference type="GO" id="GO:0042393">
    <property type="term" value="F:histone binding"/>
    <property type="evidence" value="ECO:0000269"/>
    <property type="project" value="PomBase"/>
</dbReference>
<dbReference type="GO" id="GO:0035064">
    <property type="term" value="F:methylated histone binding"/>
    <property type="evidence" value="ECO:0000318"/>
    <property type="project" value="GO_Central"/>
</dbReference>
<dbReference type="GO" id="GO:0006325">
    <property type="term" value="P:chromatin organization"/>
    <property type="evidence" value="ECO:0000315"/>
    <property type="project" value="PomBase"/>
</dbReference>
<dbReference type="GO" id="GO:0031507">
    <property type="term" value="P:heterochromatin formation"/>
    <property type="evidence" value="ECO:0000314"/>
    <property type="project" value="PomBase"/>
</dbReference>
<dbReference type="GO" id="GO:0031508">
    <property type="term" value="P:pericentric heterochromatin formation"/>
    <property type="evidence" value="ECO:0000315"/>
    <property type="project" value="PomBase"/>
</dbReference>
<dbReference type="GO" id="GO:0000183">
    <property type="term" value="P:rDNA heterochromatin formation"/>
    <property type="evidence" value="ECO:0000315"/>
    <property type="project" value="PomBase"/>
</dbReference>
<dbReference type="GO" id="GO:0031048">
    <property type="term" value="P:regulatory ncRNA-mediated heterochromatin formation"/>
    <property type="evidence" value="ECO:0000315"/>
    <property type="project" value="PomBase"/>
</dbReference>
<dbReference type="GO" id="GO:0030466">
    <property type="term" value="P:silent mating-type cassette heterochromatin formation"/>
    <property type="evidence" value="ECO:0000315"/>
    <property type="project" value="PomBase"/>
</dbReference>
<dbReference type="GO" id="GO:0031509">
    <property type="term" value="P:subtelomeric heterochromatin formation"/>
    <property type="evidence" value="ECO:0000315"/>
    <property type="project" value="PomBase"/>
</dbReference>
<dbReference type="CDD" id="cd18637">
    <property type="entry name" value="CD_Swi6_like"/>
    <property type="match status" value="1"/>
</dbReference>
<dbReference type="Gene3D" id="2.40.50.40">
    <property type="match status" value="2"/>
</dbReference>
<dbReference type="InterPro" id="IPR016197">
    <property type="entry name" value="Chromo-like_dom_sf"/>
</dbReference>
<dbReference type="InterPro" id="IPR000953">
    <property type="entry name" value="Chromo/chromo_shadow_dom"/>
</dbReference>
<dbReference type="InterPro" id="IPR023780">
    <property type="entry name" value="Chromo_domain"/>
</dbReference>
<dbReference type="InterPro" id="IPR008251">
    <property type="entry name" value="Chromo_shadow_dom"/>
</dbReference>
<dbReference type="InterPro" id="IPR051219">
    <property type="entry name" value="Heterochromatin_chromo-domain"/>
</dbReference>
<dbReference type="PANTHER" id="PTHR22812">
    <property type="entry name" value="CHROMOBOX PROTEIN"/>
    <property type="match status" value="1"/>
</dbReference>
<dbReference type="Pfam" id="PF00385">
    <property type="entry name" value="Chromo"/>
    <property type="match status" value="1"/>
</dbReference>
<dbReference type="Pfam" id="PF01393">
    <property type="entry name" value="Chromo_shadow"/>
    <property type="match status" value="1"/>
</dbReference>
<dbReference type="SMART" id="SM00298">
    <property type="entry name" value="CHROMO"/>
    <property type="match status" value="1"/>
</dbReference>
<dbReference type="SMART" id="SM00300">
    <property type="entry name" value="ChSh"/>
    <property type="match status" value="1"/>
</dbReference>
<dbReference type="SUPFAM" id="SSF54160">
    <property type="entry name" value="Chromo domain-like"/>
    <property type="match status" value="2"/>
</dbReference>
<dbReference type="PROSITE" id="PS50013">
    <property type="entry name" value="CHROMO_2"/>
    <property type="match status" value="1"/>
</dbReference>
<accession>O42934</accession>
<proteinExistence type="evidence at protein level"/>
<sequence length="380" mass="42955">MVKSADLDLMNSIISESDENFSPPPFTVEEAENSINNKSSTASLESPQNGSWHPSLYGLSVPEKTHIQNSLDLYSHGNSGSQKTHNVSFSCEIRKVKSSKLSPISNMEDSEDKKEEDESSSYKNEFKSSSSASVSSNFEKTSGSDDHNSQSPVPLNEGFEYIASSGSEDKNSDEEFAVEMILDSRMKKDGSGFQYYLKWEGYDDPSDNTWNDEEDCAGCLELIDAYWESRGGKPDLSSLIRLTRSRARSSNEASYVEKDESSNSDDSISYKRRRSRNAANRITDYVDSDLSESSMKEKQSKIEKYMKSDKSSKNFKPPFQKKSWEDLVDCVKTVQQLDNGKLIAKIKWKNGYVSTHDNIIIHQKCPLKIIEYYEAHIKFT</sequence>
<feature type="chain" id="PRO_0000080239" description="Chromo domain-containing protein 2">
    <location>
        <begin position="1"/>
        <end position="380"/>
    </location>
</feature>
<feature type="domain" description="Chromo" evidence="2">
    <location>
        <begin position="176"/>
        <end position="238"/>
    </location>
</feature>
<feature type="region of interest" description="Disordered" evidence="3">
    <location>
        <begin position="14"/>
        <end position="58"/>
    </location>
</feature>
<feature type="region of interest" description="Disordered" evidence="3">
    <location>
        <begin position="100"/>
        <end position="156"/>
    </location>
</feature>
<feature type="region of interest" description="Disordered" evidence="3">
    <location>
        <begin position="250"/>
        <end position="273"/>
    </location>
</feature>
<feature type="compositionally biased region" description="Polar residues" evidence="3">
    <location>
        <begin position="33"/>
        <end position="52"/>
    </location>
</feature>
<feature type="compositionally biased region" description="Acidic residues" evidence="3">
    <location>
        <begin position="108"/>
        <end position="119"/>
    </location>
</feature>
<feature type="compositionally biased region" description="Low complexity" evidence="3">
    <location>
        <begin position="121"/>
        <end position="140"/>
    </location>
</feature>
<feature type="turn" evidence="5">
    <location>
        <begin position="325"/>
        <end position="327"/>
    </location>
</feature>
<feature type="strand" evidence="5">
    <location>
        <begin position="328"/>
        <end position="336"/>
    </location>
</feature>
<feature type="strand" evidence="5">
    <location>
        <begin position="342"/>
        <end position="348"/>
    </location>
</feature>
<feature type="strand" evidence="5">
    <location>
        <begin position="353"/>
        <end position="357"/>
    </location>
</feature>
<feature type="helix" evidence="5">
    <location>
        <begin position="358"/>
        <end position="364"/>
    </location>
</feature>
<feature type="helix" evidence="5">
    <location>
        <begin position="366"/>
        <end position="374"/>
    </location>
</feature>
<feature type="strand" evidence="5">
    <location>
        <begin position="377"/>
        <end position="379"/>
    </location>
</feature>
<protein>
    <recommendedName>
        <fullName>Chromo domain-containing protein 2</fullName>
    </recommendedName>
</protein>
<evidence type="ECO:0000250" key="1"/>
<evidence type="ECO:0000255" key="2">
    <source>
        <dbReference type="PROSITE-ProRule" id="PRU00053"/>
    </source>
</evidence>
<evidence type="ECO:0000256" key="3">
    <source>
        <dbReference type="SAM" id="MobiDB-lite"/>
    </source>
</evidence>
<evidence type="ECO:0000269" key="4">
    <source>
    </source>
</evidence>
<evidence type="ECO:0007829" key="5">
    <source>
        <dbReference type="PDB" id="6FTO"/>
    </source>
</evidence>
<organism>
    <name type="scientific">Schizosaccharomyces pombe (strain 972 / ATCC 24843)</name>
    <name type="common">Fission yeast</name>
    <dbReference type="NCBI Taxonomy" id="284812"/>
    <lineage>
        <taxon>Eukaryota</taxon>
        <taxon>Fungi</taxon>
        <taxon>Dikarya</taxon>
        <taxon>Ascomycota</taxon>
        <taxon>Taphrinomycotina</taxon>
        <taxon>Schizosaccharomycetes</taxon>
        <taxon>Schizosaccharomycetales</taxon>
        <taxon>Schizosaccharomycetaceae</taxon>
        <taxon>Schizosaccharomyces</taxon>
    </lineage>
</organism>
<keyword id="KW-0002">3D-structure</keyword>
<keyword id="KW-0238">DNA-binding</keyword>
<keyword id="KW-0539">Nucleus</keyword>
<keyword id="KW-1185">Reference proteome</keyword>
<gene>
    <name type="primary">chp2</name>
    <name type="ORF">SPBC16C6.10</name>
</gene>